<evidence type="ECO:0000250" key="1"/>
<evidence type="ECO:0000305" key="2"/>
<name>RK23_PHATC</name>
<keyword id="KW-0150">Chloroplast</keyword>
<keyword id="KW-0934">Plastid</keyword>
<keyword id="KW-1185">Reference proteome</keyword>
<keyword id="KW-0687">Ribonucleoprotein</keyword>
<keyword id="KW-0689">Ribosomal protein</keyword>
<keyword id="KW-0694">RNA-binding</keyword>
<keyword id="KW-0699">rRNA-binding</keyword>
<comment type="function">
    <text evidence="1">Binds to 23S rRNA.</text>
</comment>
<comment type="subunit">
    <text evidence="1">Part of the 50S ribosomal subunit.</text>
</comment>
<comment type="subcellular location">
    <subcellularLocation>
        <location>Plastid</location>
        <location>Chloroplast</location>
    </subcellularLocation>
</comment>
<comment type="similarity">
    <text evidence="2">Belongs to the universal ribosomal protein uL23 family.</text>
</comment>
<accession>A0T0I0</accession>
<protein>
    <recommendedName>
        <fullName evidence="2">Large ribosomal subunit protein uL23c</fullName>
    </recommendedName>
    <alternativeName>
        <fullName>50S ribosomal protein L23, chloroplastic</fullName>
    </alternativeName>
</protein>
<dbReference type="EMBL" id="EF067920">
    <property type="protein sequence ID" value="ABK20678.1"/>
    <property type="molecule type" value="Genomic_DNA"/>
</dbReference>
<dbReference type="RefSeq" id="YP_874455.1">
    <property type="nucleotide sequence ID" value="NC_008588.1"/>
</dbReference>
<dbReference type="SMR" id="A0T0I0"/>
<dbReference type="STRING" id="556484.A0T0I0"/>
<dbReference type="GeneID" id="4524657"/>
<dbReference type="InParanoid" id="A0T0I0"/>
<dbReference type="Proteomes" id="UP000000759">
    <property type="component" value="Chloroplast"/>
</dbReference>
<dbReference type="GO" id="GO:0009507">
    <property type="term" value="C:chloroplast"/>
    <property type="evidence" value="ECO:0007669"/>
    <property type="project" value="UniProtKB-SubCell"/>
</dbReference>
<dbReference type="GO" id="GO:1990904">
    <property type="term" value="C:ribonucleoprotein complex"/>
    <property type="evidence" value="ECO:0007669"/>
    <property type="project" value="UniProtKB-KW"/>
</dbReference>
<dbReference type="GO" id="GO:0005840">
    <property type="term" value="C:ribosome"/>
    <property type="evidence" value="ECO:0007669"/>
    <property type="project" value="UniProtKB-KW"/>
</dbReference>
<dbReference type="GO" id="GO:0019843">
    <property type="term" value="F:rRNA binding"/>
    <property type="evidence" value="ECO:0007669"/>
    <property type="project" value="UniProtKB-UniRule"/>
</dbReference>
<dbReference type="GO" id="GO:0003735">
    <property type="term" value="F:structural constituent of ribosome"/>
    <property type="evidence" value="ECO:0007669"/>
    <property type="project" value="InterPro"/>
</dbReference>
<dbReference type="GO" id="GO:0006412">
    <property type="term" value="P:translation"/>
    <property type="evidence" value="ECO:0007669"/>
    <property type="project" value="UniProtKB-UniRule"/>
</dbReference>
<dbReference type="FunFam" id="3.30.70.330:FF:000001">
    <property type="entry name" value="50S ribosomal protein L23"/>
    <property type="match status" value="1"/>
</dbReference>
<dbReference type="Gene3D" id="3.30.70.330">
    <property type="match status" value="1"/>
</dbReference>
<dbReference type="HAMAP" id="MF_01369_B">
    <property type="entry name" value="Ribosomal_uL23_B"/>
    <property type="match status" value="1"/>
</dbReference>
<dbReference type="InterPro" id="IPR012677">
    <property type="entry name" value="Nucleotide-bd_a/b_plait_sf"/>
</dbReference>
<dbReference type="InterPro" id="IPR013025">
    <property type="entry name" value="Ribosomal_uL23-like"/>
</dbReference>
<dbReference type="InterPro" id="IPR012678">
    <property type="entry name" value="Ribosomal_uL23/eL15/eS24_sf"/>
</dbReference>
<dbReference type="InterPro" id="IPR001014">
    <property type="entry name" value="Ribosomal_uL23_CS"/>
</dbReference>
<dbReference type="NCBIfam" id="NF004363">
    <property type="entry name" value="PRK05738.2-4"/>
    <property type="match status" value="1"/>
</dbReference>
<dbReference type="NCBIfam" id="NF004368">
    <property type="entry name" value="PRK05738.3-4"/>
    <property type="match status" value="1"/>
</dbReference>
<dbReference type="PANTHER" id="PTHR11620">
    <property type="entry name" value="60S RIBOSOMAL PROTEIN L23A"/>
    <property type="match status" value="1"/>
</dbReference>
<dbReference type="Pfam" id="PF00276">
    <property type="entry name" value="Ribosomal_L23"/>
    <property type="match status" value="1"/>
</dbReference>
<dbReference type="SUPFAM" id="SSF54189">
    <property type="entry name" value="Ribosomal proteins S24e, L23 and L15e"/>
    <property type="match status" value="1"/>
</dbReference>
<dbReference type="PROSITE" id="PS00050">
    <property type="entry name" value="RIBOSOMAL_L23"/>
    <property type="match status" value="1"/>
</dbReference>
<organism>
    <name type="scientific">Phaeodactylum tricornutum (strain CCAP 1055/1)</name>
    <dbReference type="NCBI Taxonomy" id="556484"/>
    <lineage>
        <taxon>Eukaryota</taxon>
        <taxon>Sar</taxon>
        <taxon>Stramenopiles</taxon>
        <taxon>Ochrophyta</taxon>
        <taxon>Bacillariophyta</taxon>
        <taxon>Bacillariophyceae</taxon>
        <taxon>Bacillariophycidae</taxon>
        <taxon>Naviculales</taxon>
        <taxon>Phaeodactylaceae</taxon>
        <taxon>Phaeodactylum</taxon>
    </lineage>
</organism>
<proteinExistence type="inferred from homology"/>
<gene>
    <name type="primary">rpl23</name>
</gene>
<geneLocation type="chloroplast"/>
<sequence length="102" mass="11824">MINSSDFSRSSAQIIKYPIITDKATRLLENNQYSFVVDRYSNKITIKSAIEYLFNVKVIKINTCRLPRKQKRVGKYVGWKPQYKKAIVTLSEGDIINLFTDS</sequence>
<feature type="chain" id="PRO_0000277157" description="Large ribosomal subunit protein uL23c">
    <location>
        <begin position="1"/>
        <end position="102"/>
    </location>
</feature>
<reference key="1">
    <citation type="journal article" date="2007" name="Mol. Genet. Genomics">
        <title>Chloroplast genomes of the diatoms Phaeodactylum tricornutum and Thalassiosira pseudonana: comparison with other plastid genomes of the red lineage.</title>
        <authorList>
            <person name="Oudot-Le Secq M.-P."/>
            <person name="Grimwood J."/>
            <person name="Shapiro H."/>
            <person name="Armbrust E.V."/>
            <person name="Bowler C."/>
            <person name="Green B.R."/>
        </authorList>
    </citation>
    <scope>NUCLEOTIDE SEQUENCE [LARGE SCALE GENOMIC DNA]</scope>
    <source>
        <strain>CCAP 1055/1</strain>
    </source>
</reference>